<gene>
    <name evidence="1" type="primary">nuoH</name>
    <name type="ordered locus">Acel_0274</name>
</gene>
<evidence type="ECO:0000255" key="1">
    <source>
        <dbReference type="HAMAP-Rule" id="MF_01350"/>
    </source>
</evidence>
<protein>
    <recommendedName>
        <fullName evidence="1">NADH-quinone oxidoreductase subunit H</fullName>
        <ecNumber evidence="1">7.1.1.-</ecNumber>
    </recommendedName>
    <alternativeName>
        <fullName evidence="1">NADH dehydrogenase I subunit H</fullName>
    </alternativeName>
    <alternativeName>
        <fullName evidence="1">NDH-1 subunit H</fullName>
    </alternativeName>
</protein>
<reference key="1">
    <citation type="journal article" date="2009" name="Genome Res.">
        <title>Complete genome of the cellulolytic thermophile Acidothermus cellulolyticus 11B provides insights into its ecophysiological and evolutionary adaptations.</title>
        <authorList>
            <person name="Barabote R.D."/>
            <person name="Xie G."/>
            <person name="Leu D.H."/>
            <person name="Normand P."/>
            <person name="Necsulea A."/>
            <person name="Daubin V."/>
            <person name="Medigue C."/>
            <person name="Adney W.S."/>
            <person name="Xu X.C."/>
            <person name="Lapidus A."/>
            <person name="Parales R.E."/>
            <person name="Detter C."/>
            <person name="Pujic P."/>
            <person name="Bruce D."/>
            <person name="Lavire C."/>
            <person name="Challacombe J.F."/>
            <person name="Brettin T.S."/>
            <person name="Berry A.M."/>
        </authorList>
    </citation>
    <scope>NUCLEOTIDE SEQUENCE [LARGE SCALE GENOMIC DNA]</scope>
    <source>
        <strain>ATCC 43068 / DSM 8971 / 11B</strain>
    </source>
</reference>
<accession>A0LRI8</accession>
<keyword id="KW-1003">Cell membrane</keyword>
<keyword id="KW-0472">Membrane</keyword>
<keyword id="KW-0520">NAD</keyword>
<keyword id="KW-0874">Quinone</keyword>
<keyword id="KW-1185">Reference proteome</keyword>
<keyword id="KW-1278">Translocase</keyword>
<keyword id="KW-0812">Transmembrane</keyword>
<keyword id="KW-1133">Transmembrane helix</keyword>
<keyword id="KW-0830">Ubiquinone</keyword>
<sequence length="451" mass="48976">MTVTTLGHPLAPVFAAAPLSPPTHRDIWWLIIVKTLGVFAFLVLATLFMIWAERRVVARMQQRIGPNRVGPFGLLQSLADGLKLALKEDIVPTLADKAVFILAPVISATPAFLAFAVIPFGPTVSIAGHHTNLQLTDLPVAVLFVLAMSSLGVYGIVLAGWSSGSPYPLLGGVRSAAQVVSYEIAMGLSFVGVFLYSGSLSTSDIVAAQAHRWGILWAGVSFAVYAIAMVGETNRAPFDLPEGETEIVGGFHTEYTSLKFALFYLAEYINMVTVSALMTTLFLGGWRAPWPLSLWSQANVGWWPVLWFLIKLGIVLFVFIWLRGTLPRFRYDQFMQFGWKVLIPVNLTWILVEAAIRVVNVSNWRVWVIPFAIFLALVAVGTYVADLVRQRSEVGDGGPILGPALVPNPDSPYPIPPLPGQRPLVGVLEARTDDFPVGSAAEPRNGGDGDA</sequence>
<dbReference type="EC" id="7.1.1.-" evidence="1"/>
<dbReference type="EMBL" id="CP000481">
    <property type="protein sequence ID" value="ABK52048.1"/>
    <property type="molecule type" value="Genomic_DNA"/>
</dbReference>
<dbReference type="RefSeq" id="WP_011719111.1">
    <property type="nucleotide sequence ID" value="NC_008578.1"/>
</dbReference>
<dbReference type="SMR" id="A0LRI8"/>
<dbReference type="FunCoup" id="A0LRI8">
    <property type="interactions" value="61"/>
</dbReference>
<dbReference type="STRING" id="351607.Acel_0274"/>
<dbReference type="KEGG" id="ace:Acel_0274"/>
<dbReference type="eggNOG" id="COG1005">
    <property type="taxonomic scope" value="Bacteria"/>
</dbReference>
<dbReference type="HOGENOM" id="CLU_015134_0_0_11"/>
<dbReference type="InParanoid" id="A0LRI8"/>
<dbReference type="Proteomes" id="UP000008221">
    <property type="component" value="Chromosome"/>
</dbReference>
<dbReference type="GO" id="GO:0005886">
    <property type="term" value="C:plasma membrane"/>
    <property type="evidence" value="ECO:0007669"/>
    <property type="project" value="UniProtKB-SubCell"/>
</dbReference>
<dbReference type="GO" id="GO:0003954">
    <property type="term" value="F:NADH dehydrogenase activity"/>
    <property type="evidence" value="ECO:0007669"/>
    <property type="project" value="TreeGrafter"/>
</dbReference>
<dbReference type="GO" id="GO:0016655">
    <property type="term" value="F:oxidoreductase activity, acting on NAD(P)H, quinone or similar compound as acceptor"/>
    <property type="evidence" value="ECO:0007669"/>
    <property type="project" value="UniProtKB-UniRule"/>
</dbReference>
<dbReference type="GO" id="GO:0048038">
    <property type="term" value="F:quinone binding"/>
    <property type="evidence" value="ECO:0007669"/>
    <property type="project" value="UniProtKB-KW"/>
</dbReference>
<dbReference type="GO" id="GO:0009060">
    <property type="term" value="P:aerobic respiration"/>
    <property type="evidence" value="ECO:0007669"/>
    <property type="project" value="TreeGrafter"/>
</dbReference>
<dbReference type="HAMAP" id="MF_01350">
    <property type="entry name" value="NDH1_NuoH"/>
    <property type="match status" value="1"/>
</dbReference>
<dbReference type="InterPro" id="IPR001694">
    <property type="entry name" value="NADH_UbQ_OxRdtase_su1/FPO"/>
</dbReference>
<dbReference type="InterPro" id="IPR018086">
    <property type="entry name" value="NADH_UbQ_OxRdtase_su1_CS"/>
</dbReference>
<dbReference type="NCBIfam" id="NF004741">
    <property type="entry name" value="PRK06076.1-2"/>
    <property type="match status" value="1"/>
</dbReference>
<dbReference type="NCBIfam" id="NF004743">
    <property type="entry name" value="PRK06076.1-4"/>
    <property type="match status" value="1"/>
</dbReference>
<dbReference type="PANTHER" id="PTHR11432">
    <property type="entry name" value="NADH DEHYDROGENASE SUBUNIT 1"/>
    <property type="match status" value="1"/>
</dbReference>
<dbReference type="PANTHER" id="PTHR11432:SF3">
    <property type="entry name" value="NADH-UBIQUINONE OXIDOREDUCTASE CHAIN 1"/>
    <property type="match status" value="1"/>
</dbReference>
<dbReference type="Pfam" id="PF00146">
    <property type="entry name" value="NADHdh"/>
    <property type="match status" value="1"/>
</dbReference>
<dbReference type="PROSITE" id="PS00667">
    <property type="entry name" value="COMPLEX1_ND1_1"/>
    <property type="match status" value="1"/>
</dbReference>
<dbReference type="PROSITE" id="PS00668">
    <property type="entry name" value="COMPLEX1_ND1_2"/>
    <property type="match status" value="1"/>
</dbReference>
<comment type="function">
    <text evidence="1">NDH-1 shuttles electrons from NADH, via FMN and iron-sulfur (Fe-S) centers, to quinones in the respiratory chain. The immediate electron acceptor for the enzyme in this species is believed to be ubiquinone. Couples the redox reaction to proton translocation (for every two electrons transferred, four hydrogen ions are translocated across the cytoplasmic membrane), and thus conserves the redox energy in a proton gradient. This subunit may bind ubiquinone.</text>
</comment>
<comment type="catalytic activity">
    <reaction evidence="1">
        <text>a quinone + NADH + 5 H(+)(in) = a quinol + NAD(+) + 4 H(+)(out)</text>
        <dbReference type="Rhea" id="RHEA:57888"/>
        <dbReference type="ChEBI" id="CHEBI:15378"/>
        <dbReference type="ChEBI" id="CHEBI:24646"/>
        <dbReference type="ChEBI" id="CHEBI:57540"/>
        <dbReference type="ChEBI" id="CHEBI:57945"/>
        <dbReference type="ChEBI" id="CHEBI:132124"/>
    </reaction>
</comment>
<comment type="subunit">
    <text evidence="1">NDH-1 is composed of 14 different subunits. Subunits NuoA, H, J, K, L, M, N constitute the membrane sector of the complex.</text>
</comment>
<comment type="subcellular location">
    <subcellularLocation>
        <location evidence="1">Cell membrane</location>
        <topology evidence="1">Multi-pass membrane protein</topology>
    </subcellularLocation>
</comment>
<comment type="similarity">
    <text evidence="1">Belongs to the complex I subunit 1 family.</text>
</comment>
<name>NUOH_ACIC1</name>
<feature type="chain" id="PRO_0000298786" description="NADH-quinone oxidoreductase subunit H">
    <location>
        <begin position="1"/>
        <end position="451"/>
    </location>
</feature>
<feature type="transmembrane region" description="Helical" evidence="1">
    <location>
        <begin position="30"/>
        <end position="50"/>
    </location>
</feature>
<feature type="transmembrane region" description="Helical" evidence="1">
    <location>
        <begin position="98"/>
        <end position="118"/>
    </location>
</feature>
<feature type="transmembrane region" description="Helical" evidence="1">
    <location>
        <begin position="138"/>
        <end position="158"/>
    </location>
</feature>
<feature type="transmembrane region" description="Helical" evidence="1">
    <location>
        <begin position="176"/>
        <end position="196"/>
    </location>
</feature>
<feature type="transmembrane region" description="Helical" evidence="1">
    <location>
        <begin position="213"/>
        <end position="233"/>
    </location>
</feature>
<feature type="transmembrane region" description="Helical" evidence="1">
    <location>
        <begin position="262"/>
        <end position="282"/>
    </location>
</feature>
<feature type="transmembrane region" description="Helical" evidence="1">
    <location>
        <begin position="302"/>
        <end position="322"/>
    </location>
</feature>
<feature type="transmembrane region" description="Helical" evidence="1">
    <location>
        <begin position="336"/>
        <end position="356"/>
    </location>
</feature>
<feature type="transmembrane region" description="Helical" evidence="1">
    <location>
        <begin position="368"/>
        <end position="388"/>
    </location>
</feature>
<proteinExistence type="inferred from homology"/>
<organism>
    <name type="scientific">Acidothermus cellulolyticus (strain ATCC 43068 / DSM 8971 / 11B)</name>
    <dbReference type="NCBI Taxonomy" id="351607"/>
    <lineage>
        <taxon>Bacteria</taxon>
        <taxon>Bacillati</taxon>
        <taxon>Actinomycetota</taxon>
        <taxon>Actinomycetes</taxon>
        <taxon>Acidothermales</taxon>
        <taxon>Acidothermaceae</taxon>
        <taxon>Acidothermus</taxon>
    </lineage>
</organism>